<sequence>MNNLDLSLYLVTNNSEDEEKFLNIIEESLKGGVSVVQLREKKAETLDFYNLALKVKEITQKYNVPLIINDRIDIALAIDADGVHVGQSDMPAKTARSMIGEDKILGVSAANIKEAKKAQRESADYIGVGAVYPTNTKDDATSVPKKELKEIVKSVDIPVVAIGGITQENAHELNDCGIDGLSVVSAIMEAKNPKIASENLLKEFKAKNS</sequence>
<accession>A5ULP4</accession>
<name>THIE_METS3</name>
<keyword id="KW-0460">Magnesium</keyword>
<keyword id="KW-0479">Metal-binding</keyword>
<keyword id="KW-0784">Thiamine biosynthesis</keyword>
<keyword id="KW-0808">Transferase</keyword>
<gene>
    <name evidence="1" type="primary">thiE</name>
    <name type="ordered locus">Msm_0917</name>
</gene>
<organism>
    <name type="scientific">Methanobrevibacter smithii (strain ATCC 35061 / DSM 861 / OCM 144 / PS)</name>
    <dbReference type="NCBI Taxonomy" id="420247"/>
    <lineage>
        <taxon>Archaea</taxon>
        <taxon>Methanobacteriati</taxon>
        <taxon>Methanobacteriota</taxon>
        <taxon>Methanomada group</taxon>
        <taxon>Methanobacteria</taxon>
        <taxon>Methanobacteriales</taxon>
        <taxon>Methanobacteriaceae</taxon>
        <taxon>Methanobrevibacter</taxon>
    </lineage>
</organism>
<protein>
    <recommendedName>
        <fullName evidence="1">Thiamine-phosphate synthase</fullName>
        <shortName evidence="1">TP synthase</shortName>
        <shortName evidence="1">TPS</shortName>
        <ecNumber evidence="1">2.5.1.3</ecNumber>
    </recommendedName>
    <alternativeName>
        <fullName evidence="1">Thiamine-phosphate pyrophosphorylase</fullName>
        <shortName evidence="1">TMP pyrophosphorylase</shortName>
        <shortName evidence="1">TMP-PPase</shortName>
    </alternativeName>
</protein>
<comment type="function">
    <text evidence="1">Condenses 4-methyl-5-(beta-hydroxyethyl)thiazole monophosphate (THZ-P) and 2-methyl-4-amino-5-hydroxymethyl pyrimidine pyrophosphate (HMP-PP) to form thiamine monophosphate (TMP).</text>
</comment>
<comment type="catalytic activity">
    <reaction evidence="1">
        <text>2-[(2R,5Z)-2-carboxy-4-methylthiazol-5(2H)-ylidene]ethyl phosphate + 4-amino-2-methyl-5-(diphosphooxymethyl)pyrimidine + 2 H(+) = thiamine phosphate + CO2 + diphosphate</text>
        <dbReference type="Rhea" id="RHEA:47844"/>
        <dbReference type="ChEBI" id="CHEBI:15378"/>
        <dbReference type="ChEBI" id="CHEBI:16526"/>
        <dbReference type="ChEBI" id="CHEBI:33019"/>
        <dbReference type="ChEBI" id="CHEBI:37575"/>
        <dbReference type="ChEBI" id="CHEBI:57841"/>
        <dbReference type="ChEBI" id="CHEBI:62899"/>
        <dbReference type="EC" id="2.5.1.3"/>
    </reaction>
</comment>
<comment type="catalytic activity">
    <reaction evidence="1">
        <text>2-(2-carboxy-4-methylthiazol-5-yl)ethyl phosphate + 4-amino-2-methyl-5-(diphosphooxymethyl)pyrimidine + 2 H(+) = thiamine phosphate + CO2 + diphosphate</text>
        <dbReference type="Rhea" id="RHEA:47848"/>
        <dbReference type="ChEBI" id="CHEBI:15378"/>
        <dbReference type="ChEBI" id="CHEBI:16526"/>
        <dbReference type="ChEBI" id="CHEBI:33019"/>
        <dbReference type="ChEBI" id="CHEBI:37575"/>
        <dbReference type="ChEBI" id="CHEBI:57841"/>
        <dbReference type="ChEBI" id="CHEBI:62890"/>
        <dbReference type="EC" id="2.5.1.3"/>
    </reaction>
</comment>
<comment type="catalytic activity">
    <reaction evidence="1">
        <text>4-methyl-5-(2-phosphooxyethyl)-thiazole + 4-amino-2-methyl-5-(diphosphooxymethyl)pyrimidine + H(+) = thiamine phosphate + diphosphate</text>
        <dbReference type="Rhea" id="RHEA:22328"/>
        <dbReference type="ChEBI" id="CHEBI:15378"/>
        <dbReference type="ChEBI" id="CHEBI:33019"/>
        <dbReference type="ChEBI" id="CHEBI:37575"/>
        <dbReference type="ChEBI" id="CHEBI:57841"/>
        <dbReference type="ChEBI" id="CHEBI:58296"/>
        <dbReference type="EC" id="2.5.1.3"/>
    </reaction>
</comment>
<comment type="cofactor">
    <cofactor evidence="1">
        <name>Mg(2+)</name>
        <dbReference type="ChEBI" id="CHEBI:18420"/>
    </cofactor>
    <text evidence="1">Binds 1 Mg(2+) ion per subunit.</text>
</comment>
<comment type="pathway">
    <text evidence="1">Cofactor biosynthesis; thiamine diphosphate biosynthesis; thiamine phosphate from 4-amino-2-methyl-5-diphosphomethylpyrimidine and 4-methyl-5-(2-phosphoethyl)-thiazole: step 1/1.</text>
</comment>
<comment type="similarity">
    <text evidence="1">Belongs to the thiamine-phosphate synthase family.</text>
</comment>
<proteinExistence type="inferred from homology"/>
<reference key="1">
    <citation type="journal article" date="2007" name="Proc. Natl. Acad. Sci. U.S.A.">
        <title>Genomic and metabolic adaptations of Methanobrevibacter smithii to the human gut.</title>
        <authorList>
            <person name="Samuel B.S."/>
            <person name="Hansen E.E."/>
            <person name="Manchester J.K."/>
            <person name="Coutinho P.M."/>
            <person name="Henrissat B."/>
            <person name="Fulton R."/>
            <person name="Latreille P."/>
            <person name="Kim K."/>
            <person name="Wilson R.K."/>
            <person name="Gordon J.I."/>
        </authorList>
    </citation>
    <scope>NUCLEOTIDE SEQUENCE [LARGE SCALE GENOMIC DNA]</scope>
    <source>
        <strain>ATCC 35061 / DSM 861 / OCM 144 / PS</strain>
    </source>
</reference>
<feature type="chain" id="PRO_1000057645" description="Thiamine-phosphate synthase">
    <location>
        <begin position="1"/>
        <end position="209"/>
    </location>
</feature>
<feature type="binding site" evidence="1">
    <location>
        <begin position="37"/>
        <end position="41"/>
    </location>
    <ligand>
        <name>4-amino-2-methyl-5-(diphosphooxymethyl)pyrimidine</name>
        <dbReference type="ChEBI" id="CHEBI:57841"/>
    </ligand>
</feature>
<feature type="binding site" evidence="1">
    <location>
        <position position="69"/>
    </location>
    <ligand>
        <name>4-amino-2-methyl-5-(diphosphooxymethyl)pyrimidine</name>
        <dbReference type="ChEBI" id="CHEBI:57841"/>
    </ligand>
</feature>
<feature type="binding site" evidence="1">
    <location>
        <position position="70"/>
    </location>
    <ligand>
        <name>Mg(2+)</name>
        <dbReference type="ChEBI" id="CHEBI:18420"/>
    </ligand>
</feature>
<feature type="binding site" evidence="1">
    <location>
        <position position="89"/>
    </location>
    <ligand>
        <name>Mg(2+)</name>
        <dbReference type="ChEBI" id="CHEBI:18420"/>
    </ligand>
</feature>
<feature type="binding site" evidence="1">
    <location>
        <position position="108"/>
    </location>
    <ligand>
        <name>4-amino-2-methyl-5-(diphosphooxymethyl)pyrimidine</name>
        <dbReference type="ChEBI" id="CHEBI:57841"/>
    </ligand>
</feature>
<feature type="binding site" evidence="1">
    <location>
        <begin position="134"/>
        <end position="136"/>
    </location>
    <ligand>
        <name>2-[(2R,5Z)-2-carboxy-4-methylthiazol-5(2H)-ylidene]ethyl phosphate</name>
        <dbReference type="ChEBI" id="CHEBI:62899"/>
    </ligand>
</feature>
<feature type="binding site" evidence="1">
    <location>
        <position position="137"/>
    </location>
    <ligand>
        <name>4-amino-2-methyl-5-(diphosphooxymethyl)pyrimidine</name>
        <dbReference type="ChEBI" id="CHEBI:57841"/>
    </ligand>
</feature>
<feature type="binding site" evidence="1">
    <location>
        <position position="164"/>
    </location>
    <ligand>
        <name>2-[(2R,5Z)-2-carboxy-4-methylthiazol-5(2H)-ylidene]ethyl phosphate</name>
        <dbReference type="ChEBI" id="CHEBI:62899"/>
    </ligand>
</feature>
<feature type="binding site" evidence="1">
    <location>
        <begin position="184"/>
        <end position="185"/>
    </location>
    <ligand>
        <name>2-[(2R,5Z)-2-carboxy-4-methylthiazol-5(2H)-ylidene]ethyl phosphate</name>
        <dbReference type="ChEBI" id="CHEBI:62899"/>
    </ligand>
</feature>
<dbReference type="EC" id="2.5.1.3" evidence="1"/>
<dbReference type="EMBL" id="CP000678">
    <property type="protein sequence ID" value="ABQ87122.1"/>
    <property type="molecule type" value="Genomic_DNA"/>
</dbReference>
<dbReference type="RefSeq" id="WP_011954170.1">
    <property type="nucleotide sequence ID" value="NZ_CP117965.1"/>
</dbReference>
<dbReference type="SMR" id="A5ULP4"/>
<dbReference type="STRING" id="420247.Msm_0917"/>
<dbReference type="EnsemblBacteria" id="ABQ87122">
    <property type="protein sequence ID" value="ABQ87122"/>
    <property type="gene ID" value="Msm_0917"/>
</dbReference>
<dbReference type="GeneID" id="78817557"/>
<dbReference type="KEGG" id="msi:Msm_0917"/>
<dbReference type="PATRIC" id="fig|420247.28.peg.913"/>
<dbReference type="eggNOG" id="arCOG01089">
    <property type="taxonomic scope" value="Archaea"/>
</dbReference>
<dbReference type="HOGENOM" id="CLU_018272_3_2_2"/>
<dbReference type="UniPathway" id="UPA00060">
    <property type="reaction ID" value="UER00141"/>
</dbReference>
<dbReference type="Proteomes" id="UP000001992">
    <property type="component" value="Chromosome"/>
</dbReference>
<dbReference type="GO" id="GO:0005737">
    <property type="term" value="C:cytoplasm"/>
    <property type="evidence" value="ECO:0007669"/>
    <property type="project" value="TreeGrafter"/>
</dbReference>
<dbReference type="GO" id="GO:0000287">
    <property type="term" value="F:magnesium ion binding"/>
    <property type="evidence" value="ECO:0007669"/>
    <property type="project" value="UniProtKB-UniRule"/>
</dbReference>
<dbReference type="GO" id="GO:0004789">
    <property type="term" value="F:thiamine-phosphate diphosphorylase activity"/>
    <property type="evidence" value="ECO:0007669"/>
    <property type="project" value="UniProtKB-UniRule"/>
</dbReference>
<dbReference type="GO" id="GO:0009228">
    <property type="term" value="P:thiamine biosynthetic process"/>
    <property type="evidence" value="ECO:0007669"/>
    <property type="project" value="UniProtKB-KW"/>
</dbReference>
<dbReference type="GO" id="GO:0009229">
    <property type="term" value="P:thiamine diphosphate biosynthetic process"/>
    <property type="evidence" value="ECO:0007669"/>
    <property type="project" value="UniProtKB-UniRule"/>
</dbReference>
<dbReference type="CDD" id="cd00564">
    <property type="entry name" value="TMP_TenI"/>
    <property type="match status" value="1"/>
</dbReference>
<dbReference type="FunFam" id="3.20.20.70:FF:000096">
    <property type="entry name" value="Thiamine-phosphate synthase"/>
    <property type="match status" value="1"/>
</dbReference>
<dbReference type="Gene3D" id="3.20.20.70">
    <property type="entry name" value="Aldolase class I"/>
    <property type="match status" value="1"/>
</dbReference>
<dbReference type="HAMAP" id="MF_00097">
    <property type="entry name" value="TMP_synthase"/>
    <property type="match status" value="1"/>
</dbReference>
<dbReference type="InterPro" id="IPR013785">
    <property type="entry name" value="Aldolase_TIM"/>
</dbReference>
<dbReference type="InterPro" id="IPR036206">
    <property type="entry name" value="ThiamineP_synth_sf"/>
</dbReference>
<dbReference type="InterPro" id="IPR022998">
    <property type="entry name" value="ThiamineP_synth_TenI"/>
</dbReference>
<dbReference type="InterPro" id="IPR034291">
    <property type="entry name" value="TMP_synthase"/>
</dbReference>
<dbReference type="NCBIfam" id="TIGR00693">
    <property type="entry name" value="thiE"/>
    <property type="match status" value="1"/>
</dbReference>
<dbReference type="PANTHER" id="PTHR20857:SF23">
    <property type="entry name" value="THIAMINE BIOSYNTHETIC BIFUNCTIONAL ENZYME"/>
    <property type="match status" value="1"/>
</dbReference>
<dbReference type="PANTHER" id="PTHR20857">
    <property type="entry name" value="THIAMINE-PHOSPHATE PYROPHOSPHORYLASE"/>
    <property type="match status" value="1"/>
</dbReference>
<dbReference type="Pfam" id="PF02581">
    <property type="entry name" value="TMP-TENI"/>
    <property type="match status" value="1"/>
</dbReference>
<dbReference type="SUPFAM" id="SSF51391">
    <property type="entry name" value="Thiamin phosphate synthase"/>
    <property type="match status" value="1"/>
</dbReference>
<evidence type="ECO:0000255" key="1">
    <source>
        <dbReference type="HAMAP-Rule" id="MF_00097"/>
    </source>
</evidence>